<name>MNMG_PSYWF</name>
<reference key="1">
    <citation type="submission" date="2007-05" db="EMBL/GenBank/DDBJ databases">
        <title>Complete sequence of chromosome of Psychrobacter sp. PRwf-1.</title>
        <authorList>
            <consortium name="US DOE Joint Genome Institute"/>
            <person name="Copeland A."/>
            <person name="Lucas S."/>
            <person name="Lapidus A."/>
            <person name="Barry K."/>
            <person name="Detter J.C."/>
            <person name="Glavina del Rio T."/>
            <person name="Hammon N."/>
            <person name="Israni S."/>
            <person name="Dalin E."/>
            <person name="Tice H."/>
            <person name="Pitluck S."/>
            <person name="Chain P."/>
            <person name="Malfatti S."/>
            <person name="Shin M."/>
            <person name="Vergez L."/>
            <person name="Schmutz J."/>
            <person name="Larimer F."/>
            <person name="Land M."/>
            <person name="Hauser L."/>
            <person name="Kyrpides N."/>
            <person name="Kim E."/>
            <person name="Tiedje J."/>
            <person name="Richardson P."/>
        </authorList>
    </citation>
    <scope>NUCLEOTIDE SEQUENCE [LARGE SCALE GENOMIC DNA]</scope>
    <source>
        <strain>PRwf-1</strain>
    </source>
</reference>
<sequence>MSSTSTSNTAGITYPKAYDVVVIGGGHAGTEAALAAARMGAQTLLLTHNIETLGQMSCNPAIGGIGKSHLVREIDALGGAMALATDKAGIQFRVLNSRKGAAVRATRAQADRILYKAAIRHTLENQPNLDLFQQGADDILVENGKACAVVTATGIIFRTKTVVLTSGTFLGGVIHIGLDNSKGGRAGDQPSIKLAERLRELKLPVGRLKTGTPARIDARTVDFSVMQTQPGDTPLPVMSFMGNVDMHPEQVNCFITHTNEKTHDIIRKHLDRSPLFSGTIEGVGPRYCPSIEDKIHRFADKNSHQIFIEPEGLTTHELYPNGISTSLPFDVQLEFIRTMAGLENAHITRPGYAIEYDYFNPQNLKPTLETKSIDSLYFAGQINGTTGYEEAGVQGLLAGVNAALSTQDNPVMDSWTPRRDQAYLGVLVDDLITHGTKEPYRMFTSRAEYRLLLREDNADQRLTEIGRKLGLVDDTRWQAYQQKMESMATESARLKDLWATPHNELGKKFTEQTGEVLSKEATAYDLLKRPNVGFNDIAAVTGAQVAADVGEQIEISVKYAGYIDRQQEDIDQMKRLENTQLPADFDYKAVSGLSNEIVQKLNDIRPATLAQASRISGVTPAAIQLLGMTLKKQKKAKAALDI</sequence>
<protein>
    <recommendedName>
        <fullName evidence="1">tRNA uridine 5-carboxymethylaminomethyl modification enzyme MnmG</fullName>
    </recommendedName>
    <alternativeName>
        <fullName evidence="1">Glucose-inhibited division protein A</fullName>
    </alternativeName>
</protein>
<evidence type="ECO:0000255" key="1">
    <source>
        <dbReference type="HAMAP-Rule" id="MF_00129"/>
    </source>
</evidence>
<organism>
    <name type="scientific">Psychrobacter sp. (strain PRwf-1)</name>
    <dbReference type="NCBI Taxonomy" id="349106"/>
    <lineage>
        <taxon>Bacteria</taxon>
        <taxon>Pseudomonadati</taxon>
        <taxon>Pseudomonadota</taxon>
        <taxon>Gammaproteobacteria</taxon>
        <taxon>Moraxellales</taxon>
        <taxon>Moraxellaceae</taxon>
        <taxon>Psychrobacter</taxon>
    </lineage>
</organism>
<accession>A5WGD0</accession>
<dbReference type="EMBL" id="CP000713">
    <property type="protein sequence ID" value="ABQ94721.1"/>
    <property type="molecule type" value="Genomic_DNA"/>
</dbReference>
<dbReference type="SMR" id="A5WGD0"/>
<dbReference type="STRING" id="349106.PsycPRwf_1781"/>
<dbReference type="KEGG" id="prw:PsycPRwf_1781"/>
<dbReference type="eggNOG" id="COG0445">
    <property type="taxonomic scope" value="Bacteria"/>
</dbReference>
<dbReference type="HOGENOM" id="CLU_007831_2_2_6"/>
<dbReference type="GO" id="GO:0005829">
    <property type="term" value="C:cytosol"/>
    <property type="evidence" value="ECO:0007669"/>
    <property type="project" value="TreeGrafter"/>
</dbReference>
<dbReference type="GO" id="GO:0050660">
    <property type="term" value="F:flavin adenine dinucleotide binding"/>
    <property type="evidence" value="ECO:0007669"/>
    <property type="project" value="UniProtKB-UniRule"/>
</dbReference>
<dbReference type="GO" id="GO:0030488">
    <property type="term" value="P:tRNA methylation"/>
    <property type="evidence" value="ECO:0007669"/>
    <property type="project" value="TreeGrafter"/>
</dbReference>
<dbReference type="GO" id="GO:0002098">
    <property type="term" value="P:tRNA wobble uridine modification"/>
    <property type="evidence" value="ECO:0007669"/>
    <property type="project" value="InterPro"/>
</dbReference>
<dbReference type="FunFam" id="1.10.10.1800:FF:000001">
    <property type="entry name" value="tRNA uridine 5-carboxymethylaminomethyl modification enzyme MnmG"/>
    <property type="match status" value="1"/>
</dbReference>
<dbReference type="FunFam" id="1.10.150.570:FF:000001">
    <property type="entry name" value="tRNA uridine 5-carboxymethylaminomethyl modification enzyme MnmG"/>
    <property type="match status" value="1"/>
</dbReference>
<dbReference type="FunFam" id="3.50.50.60:FF:000002">
    <property type="entry name" value="tRNA uridine 5-carboxymethylaminomethyl modification enzyme MnmG"/>
    <property type="match status" value="1"/>
</dbReference>
<dbReference type="FunFam" id="3.50.50.60:FF:000010">
    <property type="entry name" value="tRNA uridine 5-carboxymethylaminomethyl modification enzyme MnmG"/>
    <property type="match status" value="1"/>
</dbReference>
<dbReference type="Gene3D" id="3.50.50.60">
    <property type="entry name" value="FAD/NAD(P)-binding domain"/>
    <property type="match status" value="2"/>
</dbReference>
<dbReference type="Gene3D" id="1.10.150.570">
    <property type="entry name" value="GidA associated domain, C-terminal subdomain"/>
    <property type="match status" value="1"/>
</dbReference>
<dbReference type="Gene3D" id="1.10.10.1800">
    <property type="entry name" value="tRNA uridine 5-carboxymethylaminomethyl modification enzyme MnmG/GidA"/>
    <property type="match status" value="1"/>
</dbReference>
<dbReference type="HAMAP" id="MF_00129">
    <property type="entry name" value="MnmG_GidA"/>
    <property type="match status" value="1"/>
</dbReference>
<dbReference type="InterPro" id="IPR036188">
    <property type="entry name" value="FAD/NAD-bd_sf"/>
</dbReference>
<dbReference type="InterPro" id="IPR049312">
    <property type="entry name" value="GIDA_C_N"/>
</dbReference>
<dbReference type="InterPro" id="IPR004416">
    <property type="entry name" value="MnmG"/>
</dbReference>
<dbReference type="InterPro" id="IPR002218">
    <property type="entry name" value="MnmG-rel"/>
</dbReference>
<dbReference type="InterPro" id="IPR020595">
    <property type="entry name" value="MnmG-rel_CS"/>
</dbReference>
<dbReference type="InterPro" id="IPR026904">
    <property type="entry name" value="MnmG_C"/>
</dbReference>
<dbReference type="InterPro" id="IPR047001">
    <property type="entry name" value="MnmG_C_subdom"/>
</dbReference>
<dbReference type="InterPro" id="IPR044920">
    <property type="entry name" value="MnmG_C_subdom_sf"/>
</dbReference>
<dbReference type="InterPro" id="IPR040131">
    <property type="entry name" value="MnmG_N"/>
</dbReference>
<dbReference type="NCBIfam" id="TIGR00136">
    <property type="entry name" value="mnmG_gidA"/>
    <property type="match status" value="1"/>
</dbReference>
<dbReference type="PANTHER" id="PTHR11806">
    <property type="entry name" value="GLUCOSE INHIBITED DIVISION PROTEIN A"/>
    <property type="match status" value="1"/>
</dbReference>
<dbReference type="PANTHER" id="PTHR11806:SF0">
    <property type="entry name" value="PROTEIN MTO1 HOMOLOG, MITOCHONDRIAL"/>
    <property type="match status" value="1"/>
</dbReference>
<dbReference type="Pfam" id="PF01134">
    <property type="entry name" value="GIDA"/>
    <property type="match status" value="1"/>
</dbReference>
<dbReference type="Pfam" id="PF21680">
    <property type="entry name" value="GIDA_C_1st"/>
    <property type="match status" value="1"/>
</dbReference>
<dbReference type="Pfam" id="PF13932">
    <property type="entry name" value="SAM_GIDA_C"/>
    <property type="match status" value="1"/>
</dbReference>
<dbReference type="SMART" id="SM01228">
    <property type="entry name" value="GIDA_assoc_3"/>
    <property type="match status" value="1"/>
</dbReference>
<dbReference type="SUPFAM" id="SSF51905">
    <property type="entry name" value="FAD/NAD(P)-binding domain"/>
    <property type="match status" value="1"/>
</dbReference>
<dbReference type="PROSITE" id="PS01280">
    <property type="entry name" value="GIDA_1"/>
    <property type="match status" value="1"/>
</dbReference>
<proteinExistence type="inferred from homology"/>
<keyword id="KW-0963">Cytoplasm</keyword>
<keyword id="KW-0274">FAD</keyword>
<keyword id="KW-0285">Flavoprotein</keyword>
<keyword id="KW-0520">NAD</keyword>
<keyword id="KW-0819">tRNA processing</keyword>
<gene>
    <name evidence="1" type="primary">mnmG</name>
    <name evidence="1" type="synonym">gidA</name>
    <name type="ordered locus">PsycPRwf_1781</name>
</gene>
<comment type="function">
    <text evidence="1">NAD-binding protein involved in the addition of a carboxymethylaminomethyl (cmnm) group at the wobble position (U34) of certain tRNAs, forming tRNA-cmnm(5)s(2)U34.</text>
</comment>
<comment type="cofactor">
    <cofactor evidence="1">
        <name>FAD</name>
        <dbReference type="ChEBI" id="CHEBI:57692"/>
    </cofactor>
</comment>
<comment type="subunit">
    <text evidence="1">Homodimer. Heterotetramer of two MnmE and two MnmG subunits.</text>
</comment>
<comment type="subcellular location">
    <subcellularLocation>
        <location evidence="1">Cytoplasm</location>
    </subcellularLocation>
</comment>
<comment type="similarity">
    <text evidence="1">Belongs to the MnmG family.</text>
</comment>
<feature type="chain" id="PRO_0000345320" description="tRNA uridine 5-carboxymethylaminomethyl modification enzyme MnmG">
    <location>
        <begin position="1"/>
        <end position="642"/>
    </location>
</feature>
<feature type="binding site" evidence="1">
    <location>
        <begin position="24"/>
        <end position="29"/>
    </location>
    <ligand>
        <name>FAD</name>
        <dbReference type="ChEBI" id="CHEBI:57692"/>
    </ligand>
</feature>
<feature type="binding site" evidence="1">
    <location>
        <begin position="284"/>
        <end position="298"/>
    </location>
    <ligand>
        <name>NAD(+)</name>
        <dbReference type="ChEBI" id="CHEBI:57540"/>
    </ligand>
</feature>